<evidence type="ECO:0000255" key="1">
    <source>
        <dbReference type="PROSITE-ProRule" id="PRU00497"/>
    </source>
</evidence>
<evidence type="ECO:0000269" key="2">
    <source>
    </source>
</evidence>
<evidence type="ECO:0000305" key="3"/>
<protein>
    <recommendedName>
        <fullName>Cuticle protein 18.6, isoform A</fullName>
    </recommendedName>
    <alternativeName>
        <fullName>LM-ACP 18.6A</fullName>
        <shortName>LM-18.6A</shortName>
    </alternativeName>
</protein>
<reference evidence="3" key="1">
    <citation type="journal article" date="2003" name="Biochim. Biophys. Acta">
        <title>Sequence determination of three cuticular proteins and isoforms from the migratory locust, Locusta migratoria, using a combination of Edman degradation and mass spectrometric techniques.</title>
        <authorList>
            <person name="Kalume D.E."/>
            <person name="Kieffer S."/>
            <person name="Rafn K."/>
            <person name="Skou L."/>
            <person name="Andersen S.O."/>
            <person name="Roepstorff P."/>
        </authorList>
    </citation>
    <scope>PROTEIN SEQUENCE</scope>
    <scope>FUNCTION</scope>
    <scope>MASS SPECTROMETRY</scope>
    <source>
        <tissue evidence="2">Pharate adult cuticle</tissue>
    </source>
</reference>
<name>CU18A_LOCMI</name>
<keyword id="KW-0193">Cuticle</keyword>
<keyword id="KW-0903">Direct protein sequencing</keyword>
<keyword id="KW-0677">Repeat</keyword>
<dbReference type="GO" id="GO:0031012">
    <property type="term" value="C:extracellular matrix"/>
    <property type="evidence" value="ECO:0007669"/>
    <property type="project" value="TreeGrafter"/>
</dbReference>
<dbReference type="GO" id="GO:0005615">
    <property type="term" value="C:extracellular space"/>
    <property type="evidence" value="ECO:0007669"/>
    <property type="project" value="TreeGrafter"/>
</dbReference>
<dbReference type="GO" id="GO:0042302">
    <property type="term" value="F:structural constituent of cuticle"/>
    <property type="evidence" value="ECO:0007669"/>
    <property type="project" value="UniProtKB-KW"/>
</dbReference>
<dbReference type="InterPro" id="IPR031311">
    <property type="entry name" value="CHIT_BIND_RR_consensus"/>
</dbReference>
<dbReference type="InterPro" id="IPR000618">
    <property type="entry name" value="Insect_cuticle"/>
</dbReference>
<dbReference type="InterPro" id="IPR051217">
    <property type="entry name" value="Insect_Cuticle_Struc_Prot"/>
</dbReference>
<dbReference type="PANTHER" id="PTHR12236:SF94">
    <property type="entry name" value="CCP84AA-RELATED"/>
    <property type="match status" value="1"/>
</dbReference>
<dbReference type="PANTHER" id="PTHR12236">
    <property type="entry name" value="STRUCTURAL CONTITUENT OF CUTICLE"/>
    <property type="match status" value="1"/>
</dbReference>
<dbReference type="Pfam" id="PF00379">
    <property type="entry name" value="Chitin_bind_4"/>
    <property type="match status" value="1"/>
</dbReference>
<dbReference type="PRINTS" id="PR00947">
    <property type="entry name" value="CUTICLE"/>
</dbReference>
<dbReference type="PROSITE" id="PS00233">
    <property type="entry name" value="CHIT_BIND_RR_1"/>
    <property type="match status" value="1"/>
</dbReference>
<dbReference type="PROSITE" id="PS51155">
    <property type="entry name" value="CHIT_BIND_RR_2"/>
    <property type="match status" value="1"/>
</dbReference>
<organism>
    <name type="scientific">Locusta migratoria</name>
    <name type="common">Migratory locust</name>
    <dbReference type="NCBI Taxonomy" id="7004"/>
    <lineage>
        <taxon>Eukaryota</taxon>
        <taxon>Metazoa</taxon>
        <taxon>Ecdysozoa</taxon>
        <taxon>Arthropoda</taxon>
        <taxon>Hexapoda</taxon>
        <taxon>Insecta</taxon>
        <taxon>Pterygota</taxon>
        <taxon>Neoptera</taxon>
        <taxon>Polyneoptera</taxon>
        <taxon>Orthoptera</taxon>
        <taxon>Caelifera</taxon>
        <taxon>Acrididea</taxon>
        <taxon>Acridomorpha</taxon>
        <taxon>Acridoidea</taxon>
        <taxon>Acrididae</taxon>
        <taxon>Oedipodinae</taxon>
        <taxon>Locusta</taxon>
    </lineage>
</organism>
<feature type="chain" id="PRO_0000196098" description="Cuticle protein 18.6, isoform A">
    <location>
        <begin position="1"/>
        <end position="185"/>
    </location>
</feature>
<feature type="repeat" description="1" evidence="3">
    <location>
        <begin position="21"/>
        <end position="24"/>
    </location>
</feature>
<feature type="repeat" description="2" evidence="3">
    <location>
        <begin position="33"/>
        <end position="36"/>
    </location>
</feature>
<feature type="repeat" description="3" evidence="3">
    <location>
        <begin position="41"/>
        <end position="44"/>
    </location>
</feature>
<feature type="repeat" description="4" evidence="3">
    <location>
        <begin position="54"/>
        <end position="57"/>
    </location>
</feature>
<feature type="domain" description="Chitin-binding type R&amp;R" evidence="1">
    <location>
        <begin position="64"/>
        <end position="134"/>
    </location>
</feature>
<feature type="repeat" description="5" evidence="3">
    <location>
        <begin position="133"/>
        <end position="136"/>
    </location>
</feature>
<feature type="repeat" description="6" evidence="3">
    <location>
        <begin position="139"/>
        <end position="142"/>
    </location>
</feature>
<feature type="repeat" description="7" evidence="3">
    <location>
        <begin position="150"/>
        <end position="153"/>
    </location>
</feature>
<comment type="function">
    <text evidence="2">Component of the cuticle of migratory locust which contains more than 100 different structural proteins.</text>
</comment>
<comment type="domain">
    <text evidence="3">The tetrapeptide (A-A-P-[AV]) repeats found throughout the protein are also present in many proteins constituting the protective envelope of other species.</text>
</comment>
<comment type="mass spectrometry"/>
<comment type="mass spectrometry"/>
<proteinExistence type="evidence at protein level"/>
<accession>P83994</accession>
<sequence>GYLGAPAVVAPGAPLAARAYAAPAYAAPLARYAAPVARAYAAPVARAYAPAVAAAPAAVEYDPHPQYSFAYNVQDAHTGDSKTQHESRDGDVVQGSYSLAEPDGSIRVVDYTADPVNGFNAVVHKEAGAHPAAAPVAVAAPVAHAPVAVAAPVRAYAAPLARAAYAAPIARASYGPALAYGGAYH</sequence>